<comment type="function">
    <text evidence="1">Phosphatidylinositol 3-phosphate-binding protein required for the abscission step in cytokinesis: recruited to the midbody during cytokinesis and acts as a regulator of abscission. May also be required for efficient homologous recombination DNA double-strand break repair (By similarity).</text>
</comment>
<comment type="subunit">
    <text evidence="1">Interacts with AP5Z1, AP5B1, AP5S1 and SPG11. Interacts with TTC19 and KIF13A (By similarity).</text>
</comment>
<comment type="subcellular location">
    <subcellularLocation>
        <location evidence="1">Cytoplasm</location>
        <location evidence="1">Cytoskeleton</location>
        <location evidence="1">Microtubule organizing center</location>
        <location evidence="1">Centrosome</location>
    </subcellularLocation>
    <subcellularLocation>
        <location evidence="1">Midbody</location>
    </subcellularLocation>
    <text evidence="1">Localizes to the centrosome during all stages of the cell cycle. Recruited to the midbody during cytokinesis by KIF13A (By similarity).</text>
</comment>
<comment type="alternative products">
    <event type="alternative splicing"/>
    <isoform>
        <id>Q5DU37-1</id>
        <name>1</name>
        <sequence type="displayed"/>
    </isoform>
    <isoform>
        <id>Q5DU37-2</id>
        <name>2</name>
        <sequence type="described" ref="VSP_030343"/>
    </isoform>
    <isoform>
        <id>Q5DU37-3</id>
        <name>3</name>
        <sequence type="described" ref="VSP_030342 VSP_030344 VSP_030345 VSP_030346"/>
    </isoform>
</comment>
<comment type="domain">
    <text evidence="1">The FYVE-type zinc finger mediates binding to phosphatidylinositol 3-phosphate and recruitment to the midbody during cytokinesis.</text>
</comment>
<comment type="similarity">
    <text evidence="8">Belongs to the ZFYVE26 family.</text>
</comment>
<comment type="sequence caution" evidence="8">
    <conflict type="erroneous initiation">
        <sequence resource="EMBL-CDS" id="BAD90401"/>
    </conflict>
</comment>
<keyword id="KW-0025">Alternative splicing</keyword>
<keyword id="KW-0131">Cell cycle</keyword>
<keyword id="KW-0132">Cell division</keyword>
<keyword id="KW-0175">Coiled coil</keyword>
<keyword id="KW-0963">Cytoplasm</keyword>
<keyword id="KW-0206">Cytoskeleton</keyword>
<keyword id="KW-0227">DNA damage</keyword>
<keyword id="KW-0234">DNA repair</keyword>
<keyword id="KW-0446">Lipid-binding</keyword>
<keyword id="KW-0479">Metal-binding</keyword>
<keyword id="KW-0597">Phosphoprotein</keyword>
<keyword id="KW-1185">Reference proteome</keyword>
<keyword id="KW-0862">Zinc</keyword>
<keyword id="KW-0863">Zinc-finger</keyword>
<gene>
    <name type="primary">Zfyve26</name>
    <name type="synonym">Kiaa0321</name>
</gene>
<name>ZFY26_MOUSE</name>
<organism>
    <name type="scientific">Mus musculus</name>
    <name type="common">Mouse</name>
    <dbReference type="NCBI Taxonomy" id="10090"/>
    <lineage>
        <taxon>Eukaryota</taxon>
        <taxon>Metazoa</taxon>
        <taxon>Chordata</taxon>
        <taxon>Craniata</taxon>
        <taxon>Vertebrata</taxon>
        <taxon>Euteleostomi</taxon>
        <taxon>Mammalia</taxon>
        <taxon>Eutheria</taxon>
        <taxon>Euarchontoglires</taxon>
        <taxon>Glires</taxon>
        <taxon>Rodentia</taxon>
        <taxon>Myomorpha</taxon>
        <taxon>Muroidea</taxon>
        <taxon>Muridae</taxon>
        <taxon>Murinae</taxon>
        <taxon>Mus</taxon>
        <taxon>Mus</taxon>
    </lineage>
</organism>
<accession>Q5DU37</accession>
<accession>B9EJ71</accession>
<accession>Q3TEM9</accession>
<accession>Q3V1N3</accession>
<accession>Q8BY74</accession>
<accession>Q8CDR8</accession>
<accession>Q923B4</accession>
<dbReference type="EMBL" id="AK029679">
    <property type="protein sequence ID" value="BAC26561.1"/>
    <property type="molecule type" value="mRNA"/>
</dbReference>
<dbReference type="EMBL" id="AK041668">
    <property type="protein sequence ID" value="BAC31027.1"/>
    <property type="molecule type" value="mRNA"/>
</dbReference>
<dbReference type="EMBL" id="AK132344">
    <property type="protein sequence ID" value="BAE21117.1"/>
    <property type="molecule type" value="mRNA"/>
</dbReference>
<dbReference type="EMBL" id="AK169541">
    <property type="protein sequence ID" value="BAE41219.1"/>
    <property type="molecule type" value="mRNA"/>
</dbReference>
<dbReference type="EMBL" id="AK220333">
    <property type="protein sequence ID" value="BAD90401.1"/>
    <property type="status" value="ALT_INIT"/>
    <property type="molecule type" value="mRNA"/>
</dbReference>
<dbReference type="EMBL" id="BC006654">
    <property type="protein sequence ID" value="AAH06654.1"/>
    <property type="molecule type" value="mRNA"/>
</dbReference>
<dbReference type="EMBL" id="BC141359">
    <property type="protein sequence ID" value="AAI41360.1"/>
    <property type="molecule type" value="mRNA"/>
</dbReference>
<dbReference type="CCDS" id="CCDS36481.1">
    <molecule id="Q5DU37-1"/>
</dbReference>
<dbReference type="RefSeq" id="NP_001008550.1">
    <molecule id="Q5DU37-1"/>
    <property type="nucleotide sequence ID" value="NM_001008550.1"/>
</dbReference>
<dbReference type="SMR" id="Q5DU37"/>
<dbReference type="BioGRID" id="229279">
    <property type="interactions" value="2"/>
</dbReference>
<dbReference type="FunCoup" id="Q5DU37">
    <property type="interactions" value="3040"/>
</dbReference>
<dbReference type="IntAct" id="Q5DU37">
    <property type="interactions" value="4"/>
</dbReference>
<dbReference type="STRING" id="10090.ENSMUSP00000021547"/>
<dbReference type="iPTMnet" id="Q5DU37"/>
<dbReference type="PhosphoSitePlus" id="Q5DU37"/>
<dbReference type="PaxDb" id="10090-ENSMUSP00000021547"/>
<dbReference type="PeptideAtlas" id="Q5DU37"/>
<dbReference type="ProteomicsDB" id="299554">
    <molecule id="Q5DU37-1"/>
</dbReference>
<dbReference type="ProteomicsDB" id="299555">
    <molecule id="Q5DU37-2"/>
</dbReference>
<dbReference type="ProteomicsDB" id="299556">
    <molecule id="Q5DU37-3"/>
</dbReference>
<dbReference type="Pumba" id="Q5DU37"/>
<dbReference type="Antibodypedia" id="24903">
    <property type="antibodies" value="73 antibodies from 25 providers"/>
</dbReference>
<dbReference type="Ensembl" id="ENSMUST00000021547.8">
    <molecule id="Q5DU37-1"/>
    <property type="protein sequence ID" value="ENSMUSP00000021547.7"/>
    <property type="gene ID" value="ENSMUSG00000066440.6"/>
</dbReference>
<dbReference type="GeneID" id="211978"/>
<dbReference type="KEGG" id="mmu:211978"/>
<dbReference type="UCSC" id="uc007oae.1">
    <molecule id="Q5DU37-1"/>
    <property type="organism name" value="mouse"/>
</dbReference>
<dbReference type="UCSC" id="uc007oaf.1">
    <molecule id="Q5DU37-3"/>
    <property type="organism name" value="mouse"/>
</dbReference>
<dbReference type="UCSC" id="uc007oah.1">
    <molecule id="Q5DU37-2"/>
    <property type="organism name" value="mouse"/>
</dbReference>
<dbReference type="AGR" id="MGI:1924767"/>
<dbReference type="CTD" id="23503"/>
<dbReference type="MGI" id="MGI:1924767">
    <property type="gene designation" value="Zfyve26"/>
</dbReference>
<dbReference type="VEuPathDB" id="HostDB:ENSMUSG00000066440"/>
<dbReference type="eggNOG" id="KOG1811">
    <property type="taxonomic scope" value="Eukaryota"/>
</dbReference>
<dbReference type="GeneTree" id="ENSGT00920000149143"/>
<dbReference type="HOGENOM" id="CLU_228199_0_0_1"/>
<dbReference type="InParanoid" id="Q5DU37"/>
<dbReference type="OMA" id="LQTCWPS"/>
<dbReference type="OrthoDB" id="1936617at2759"/>
<dbReference type="PhylomeDB" id="Q5DU37"/>
<dbReference type="TreeFam" id="TF324517"/>
<dbReference type="BioGRID-ORCS" id="211978">
    <property type="hits" value="3 hits in 113 CRISPR screens"/>
</dbReference>
<dbReference type="ChiTaRS" id="Zfyve26">
    <property type="organism name" value="mouse"/>
</dbReference>
<dbReference type="PRO" id="PR:Q5DU37"/>
<dbReference type="Proteomes" id="UP000000589">
    <property type="component" value="Chromosome 12"/>
</dbReference>
<dbReference type="RNAct" id="Q5DU37">
    <property type="molecule type" value="protein"/>
</dbReference>
<dbReference type="Bgee" id="ENSMUSG00000066440">
    <property type="expression patterns" value="Expressed in granulocyte and 244 other cell types or tissues"/>
</dbReference>
<dbReference type="ExpressionAtlas" id="Q5DU37">
    <property type="expression patterns" value="baseline and differential"/>
</dbReference>
<dbReference type="GO" id="GO:0005813">
    <property type="term" value="C:centrosome"/>
    <property type="evidence" value="ECO:0000250"/>
    <property type="project" value="UniProtKB"/>
</dbReference>
<dbReference type="GO" id="GO:0005769">
    <property type="term" value="C:early endosome"/>
    <property type="evidence" value="ECO:0000266"/>
    <property type="project" value="MGI"/>
</dbReference>
<dbReference type="GO" id="GO:0005770">
    <property type="term" value="C:late endosome"/>
    <property type="evidence" value="ECO:0000266"/>
    <property type="project" value="MGI"/>
</dbReference>
<dbReference type="GO" id="GO:0005764">
    <property type="term" value="C:lysosome"/>
    <property type="evidence" value="ECO:0000266"/>
    <property type="project" value="MGI"/>
</dbReference>
<dbReference type="GO" id="GO:0030496">
    <property type="term" value="C:midbody"/>
    <property type="evidence" value="ECO:0000250"/>
    <property type="project" value="UniProtKB"/>
</dbReference>
<dbReference type="GO" id="GO:0032266">
    <property type="term" value="F:phosphatidylinositol-3-phosphate binding"/>
    <property type="evidence" value="ECO:0000250"/>
    <property type="project" value="UniProtKB"/>
</dbReference>
<dbReference type="GO" id="GO:0019901">
    <property type="term" value="F:protein kinase binding"/>
    <property type="evidence" value="ECO:0000266"/>
    <property type="project" value="MGI"/>
</dbReference>
<dbReference type="GO" id="GO:0008270">
    <property type="term" value="F:zinc ion binding"/>
    <property type="evidence" value="ECO:0007669"/>
    <property type="project" value="UniProtKB-KW"/>
</dbReference>
<dbReference type="GO" id="GO:1905037">
    <property type="term" value="P:autophagosome organization"/>
    <property type="evidence" value="ECO:0000266"/>
    <property type="project" value="MGI"/>
</dbReference>
<dbReference type="GO" id="GO:0000724">
    <property type="term" value="P:double-strand break repair via homologous recombination"/>
    <property type="evidence" value="ECO:0000250"/>
    <property type="project" value="UniProtKB"/>
</dbReference>
<dbReference type="GO" id="GO:0007040">
    <property type="term" value="P:lysosome organization"/>
    <property type="evidence" value="ECO:0000315"/>
    <property type="project" value="MGI"/>
</dbReference>
<dbReference type="GO" id="GO:0000281">
    <property type="term" value="P:mitotic cytokinesis"/>
    <property type="evidence" value="ECO:0007669"/>
    <property type="project" value="InterPro"/>
</dbReference>
<dbReference type="GO" id="GO:0032465">
    <property type="term" value="P:regulation of cytokinesis"/>
    <property type="evidence" value="ECO:0000250"/>
    <property type="project" value="UniProtKB"/>
</dbReference>
<dbReference type="CDD" id="cd15724">
    <property type="entry name" value="FYVE_ZFY26"/>
    <property type="match status" value="1"/>
</dbReference>
<dbReference type="FunFam" id="3.30.40.10:FF:000295">
    <property type="entry name" value="Zinc finger, FYVE domain-containing 26"/>
    <property type="match status" value="1"/>
</dbReference>
<dbReference type="Gene3D" id="3.30.40.10">
    <property type="entry name" value="Zinc/RING finger domain, C3HC4 (zinc finger)"/>
    <property type="match status" value="1"/>
</dbReference>
<dbReference type="InterPro" id="IPR028730">
    <property type="entry name" value="ZFYVE26"/>
</dbReference>
<dbReference type="InterPro" id="IPR000306">
    <property type="entry name" value="Znf_FYVE"/>
</dbReference>
<dbReference type="InterPro" id="IPR017455">
    <property type="entry name" value="Znf_FYVE-rel"/>
</dbReference>
<dbReference type="InterPro" id="IPR011011">
    <property type="entry name" value="Znf_FYVE_PHD"/>
</dbReference>
<dbReference type="InterPro" id="IPR013083">
    <property type="entry name" value="Znf_RING/FYVE/PHD"/>
</dbReference>
<dbReference type="PANTHER" id="PTHR46591">
    <property type="entry name" value="ZINC FINGER FYVE DOMAIN-CONTAINING PROTEIN 26"/>
    <property type="match status" value="1"/>
</dbReference>
<dbReference type="PANTHER" id="PTHR46591:SF1">
    <property type="entry name" value="ZINC FINGER FYVE DOMAIN-CONTAINING PROTEIN 26"/>
    <property type="match status" value="1"/>
</dbReference>
<dbReference type="Pfam" id="PF01363">
    <property type="entry name" value="FYVE"/>
    <property type="match status" value="1"/>
</dbReference>
<dbReference type="SMART" id="SM00064">
    <property type="entry name" value="FYVE"/>
    <property type="match status" value="1"/>
</dbReference>
<dbReference type="SUPFAM" id="SSF57903">
    <property type="entry name" value="FYVE/PHD zinc finger"/>
    <property type="match status" value="1"/>
</dbReference>
<dbReference type="PROSITE" id="PS50178">
    <property type="entry name" value="ZF_FYVE"/>
    <property type="match status" value="1"/>
</dbReference>
<protein>
    <recommendedName>
        <fullName>Zinc finger FYVE domain-containing protein 26</fullName>
    </recommendedName>
</protein>
<reference key="1">
    <citation type="journal article" date="2005" name="Science">
        <title>The transcriptional landscape of the mammalian genome.</title>
        <authorList>
            <person name="Carninci P."/>
            <person name="Kasukawa T."/>
            <person name="Katayama S."/>
            <person name="Gough J."/>
            <person name="Frith M.C."/>
            <person name="Maeda N."/>
            <person name="Oyama R."/>
            <person name="Ravasi T."/>
            <person name="Lenhard B."/>
            <person name="Wells C."/>
            <person name="Kodzius R."/>
            <person name="Shimokawa K."/>
            <person name="Bajic V.B."/>
            <person name="Brenner S.E."/>
            <person name="Batalov S."/>
            <person name="Forrest A.R."/>
            <person name="Zavolan M."/>
            <person name="Davis M.J."/>
            <person name="Wilming L.G."/>
            <person name="Aidinis V."/>
            <person name="Allen J.E."/>
            <person name="Ambesi-Impiombato A."/>
            <person name="Apweiler R."/>
            <person name="Aturaliya R.N."/>
            <person name="Bailey T.L."/>
            <person name="Bansal M."/>
            <person name="Baxter L."/>
            <person name="Beisel K.W."/>
            <person name="Bersano T."/>
            <person name="Bono H."/>
            <person name="Chalk A.M."/>
            <person name="Chiu K.P."/>
            <person name="Choudhary V."/>
            <person name="Christoffels A."/>
            <person name="Clutterbuck D.R."/>
            <person name="Crowe M.L."/>
            <person name="Dalla E."/>
            <person name="Dalrymple B.P."/>
            <person name="de Bono B."/>
            <person name="Della Gatta G."/>
            <person name="di Bernardo D."/>
            <person name="Down T."/>
            <person name="Engstrom P."/>
            <person name="Fagiolini M."/>
            <person name="Faulkner G."/>
            <person name="Fletcher C.F."/>
            <person name="Fukushima T."/>
            <person name="Furuno M."/>
            <person name="Futaki S."/>
            <person name="Gariboldi M."/>
            <person name="Georgii-Hemming P."/>
            <person name="Gingeras T.R."/>
            <person name="Gojobori T."/>
            <person name="Green R.E."/>
            <person name="Gustincich S."/>
            <person name="Harbers M."/>
            <person name="Hayashi Y."/>
            <person name="Hensch T.K."/>
            <person name="Hirokawa N."/>
            <person name="Hill D."/>
            <person name="Huminiecki L."/>
            <person name="Iacono M."/>
            <person name="Ikeo K."/>
            <person name="Iwama A."/>
            <person name="Ishikawa T."/>
            <person name="Jakt M."/>
            <person name="Kanapin A."/>
            <person name="Katoh M."/>
            <person name="Kawasawa Y."/>
            <person name="Kelso J."/>
            <person name="Kitamura H."/>
            <person name="Kitano H."/>
            <person name="Kollias G."/>
            <person name="Krishnan S.P."/>
            <person name="Kruger A."/>
            <person name="Kummerfeld S.K."/>
            <person name="Kurochkin I.V."/>
            <person name="Lareau L.F."/>
            <person name="Lazarevic D."/>
            <person name="Lipovich L."/>
            <person name="Liu J."/>
            <person name="Liuni S."/>
            <person name="McWilliam S."/>
            <person name="Madan Babu M."/>
            <person name="Madera M."/>
            <person name="Marchionni L."/>
            <person name="Matsuda H."/>
            <person name="Matsuzawa S."/>
            <person name="Miki H."/>
            <person name="Mignone F."/>
            <person name="Miyake S."/>
            <person name="Morris K."/>
            <person name="Mottagui-Tabar S."/>
            <person name="Mulder N."/>
            <person name="Nakano N."/>
            <person name="Nakauchi H."/>
            <person name="Ng P."/>
            <person name="Nilsson R."/>
            <person name="Nishiguchi S."/>
            <person name="Nishikawa S."/>
            <person name="Nori F."/>
            <person name="Ohara O."/>
            <person name="Okazaki Y."/>
            <person name="Orlando V."/>
            <person name="Pang K.C."/>
            <person name="Pavan W.J."/>
            <person name="Pavesi G."/>
            <person name="Pesole G."/>
            <person name="Petrovsky N."/>
            <person name="Piazza S."/>
            <person name="Reed J."/>
            <person name="Reid J.F."/>
            <person name="Ring B.Z."/>
            <person name="Ringwald M."/>
            <person name="Rost B."/>
            <person name="Ruan Y."/>
            <person name="Salzberg S.L."/>
            <person name="Sandelin A."/>
            <person name="Schneider C."/>
            <person name="Schoenbach C."/>
            <person name="Sekiguchi K."/>
            <person name="Semple C.A."/>
            <person name="Seno S."/>
            <person name="Sessa L."/>
            <person name="Sheng Y."/>
            <person name="Shibata Y."/>
            <person name="Shimada H."/>
            <person name="Shimada K."/>
            <person name="Silva D."/>
            <person name="Sinclair B."/>
            <person name="Sperling S."/>
            <person name="Stupka E."/>
            <person name="Sugiura K."/>
            <person name="Sultana R."/>
            <person name="Takenaka Y."/>
            <person name="Taki K."/>
            <person name="Tammoja K."/>
            <person name="Tan S.L."/>
            <person name="Tang S."/>
            <person name="Taylor M.S."/>
            <person name="Tegner J."/>
            <person name="Teichmann S.A."/>
            <person name="Ueda H.R."/>
            <person name="van Nimwegen E."/>
            <person name="Verardo R."/>
            <person name="Wei C.L."/>
            <person name="Yagi K."/>
            <person name="Yamanishi H."/>
            <person name="Zabarovsky E."/>
            <person name="Zhu S."/>
            <person name="Zimmer A."/>
            <person name="Hide W."/>
            <person name="Bult C."/>
            <person name="Grimmond S.M."/>
            <person name="Teasdale R.D."/>
            <person name="Liu E.T."/>
            <person name="Brusic V."/>
            <person name="Quackenbush J."/>
            <person name="Wahlestedt C."/>
            <person name="Mattick J.S."/>
            <person name="Hume D.A."/>
            <person name="Kai C."/>
            <person name="Sasaki D."/>
            <person name="Tomaru Y."/>
            <person name="Fukuda S."/>
            <person name="Kanamori-Katayama M."/>
            <person name="Suzuki M."/>
            <person name="Aoki J."/>
            <person name="Arakawa T."/>
            <person name="Iida J."/>
            <person name="Imamura K."/>
            <person name="Itoh M."/>
            <person name="Kato T."/>
            <person name="Kawaji H."/>
            <person name="Kawagashira N."/>
            <person name="Kawashima T."/>
            <person name="Kojima M."/>
            <person name="Kondo S."/>
            <person name="Konno H."/>
            <person name="Nakano K."/>
            <person name="Ninomiya N."/>
            <person name="Nishio T."/>
            <person name="Okada M."/>
            <person name="Plessy C."/>
            <person name="Shibata K."/>
            <person name="Shiraki T."/>
            <person name="Suzuki S."/>
            <person name="Tagami M."/>
            <person name="Waki K."/>
            <person name="Watahiki A."/>
            <person name="Okamura-Oho Y."/>
            <person name="Suzuki H."/>
            <person name="Kawai J."/>
            <person name="Hayashizaki Y."/>
        </authorList>
    </citation>
    <scope>NUCLEOTIDE SEQUENCE [LARGE SCALE MRNA] (ISOFORMS 2 AND 3)</scope>
    <scope>NUCLEOTIDE SEQUENCE [LARGE SCALE MRNA] OF 2027-2529 (ISOFORM 1)</scope>
    <source>
        <strain>C57BL/6J</strain>
        <tissue>Head</tissue>
        <tissue>Testis</tissue>
        <tissue>Thymus</tissue>
    </source>
</reference>
<reference key="2">
    <citation type="submission" date="2005-02" db="EMBL/GenBank/DDBJ databases">
        <title>Prediction of the coding sequences of mouse homologues of KIAA gene. The complete nucleotide sequences of mouse KIAA-homologous cDNAs identified by screening of terminal sequences of cDNA clones randomly sampled from size-fractionated libraries.</title>
        <authorList>
            <person name="Okazaki N."/>
            <person name="Kikuno R.F."/>
            <person name="Ohara R."/>
            <person name="Inamoto S."/>
            <person name="Nagase T."/>
            <person name="Ohara O."/>
            <person name="Koga H."/>
        </authorList>
    </citation>
    <scope>NUCLEOTIDE SEQUENCE [LARGE SCALE MRNA] (ISOFORM 1)</scope>
    <source>
        <tissue>Embryonic intestine</tissue>
    </source>
</reference>
<reference key="3">
    <citation type="journal article" date="2004" name="Genome Res.">
        <title>The status, quality, and expansion of the NIH full-length cDNA project: the Mammalian Gene Collection (MGC).</title>
        <authorList>
            <consortium name="The MGC Project Team"/>
        </authorList>
    </citation>
    <scope>NUCLEOTIDE SEQUENCE [LARGE SCALE MRNA]</scope>
    <source>
        <strain>FVB/N</strain>
        <tissue>Brain</tissue>
        <tissue>Mammary tumor</tissue>
    </source>
</reference>
<reference key="4">
    <citation type="journal article" date="2010" name="Cell">
        <title>A tissue-specific atlas of mouse protein phosphorylation and expression.</title>
        <authorList>
            <person name="Huttlin E.L."/>
            <person name="Jedrychowski M.P."/>
            <person name="Elias J.E."/>
            <person name="Goswami T."/>
            <person name="Rad R."/>
            <person name="Beausoleil S.A."/>
            <person name="Villen J."/>
            <person name="Haas W."/>
            <person name="Sowa M.E."/>
            <person name="Gygi S.P."/>
        </authorList>
    </citation>
    <scope>PHOSPHORYLATION [LARGE SCALE ANALYSIS] AT SER-1732; SER-1770 AND SER-1772</scope>
    <scope>IDENTIFICATION BY MASS SPECTROMETRY [LARGE SCALE ANALYSIS]</scope>
    <source>
        <tissue>Brain</tissue>
        <tissue>Brown adipose tissue</tissue>
        <tissue>Kidney</tissue>
        <tissue>Liver</tissue>
        <tissue>Lung</tissue>
        <tissue>Spleen</tissue>
        <tissue>Testis</tissue>
    </source>
</reference>
<sequence>MSYPFGKEETATEEELFEFFCECLRRGDWELAQACVPQLHRGQGEIPQKVEDILQALVQCPILLRCGPDINPQRLAWLWLLVLEKWLAPEKKLLSTAIRRKLEFLFLSEDLQGDIPETILKELFETLAQGPAGSIPDRRTPQLSPEAVSVLWNLLKQAPRPAQALLELLLEDHHSASLCPSPLQKSLLDLIREALQTLRDPASQPPGVADAVCGALQALCCKAELPESEWRVLCEELLETCRTEDSPLQEERLLGCLLHKAGRNLLSLYGHTYAEKVAERPPKATLSGKDHPDPERAMLALFSTPDPAHAWKMAFFYCLSNNKHFLEQILVTALTLLKEEDFPSLGYLLDREFRPLSHLLVLLGWTHCQSLESAKRLLQTLYRTQDQGHDELLRDACEGLWAHLEVLEWCVQQSSNLIPKRELLCHLHGGDSHSVLYSLHHLTNLPALNEEEVLKLLQKEPTKDLQGEHETHDASVPEHLSQCQSLTLYQGFCAMKYAVYALCVNSHQHSQCQDCRDSASEDLALVEPGSDSLPSPGASHLFPTYLARCRQYLHSIPASLCLEILENIFSLLLITSADLHPEPHLPEDYAEDEDIEGKGPLGLRSPSESPQHIAATERRSERASMGPRNPAHTVPGCPKAEPKDSSPGPHKHSFLDLKHFTSGVNGFLADEFAMGAFLSLLQEQLTEISSHRTPEETKLPEDQSCSAARDGLQSRLHRFSKVLSEAQWRYKVVTSNQGSEEQPSRRYRPIATRHSSLRRGRRTRRTRADGRERGSNPSLEGTSSELSTSTSEGSLSAVSGQVESDSRFQTQPQSSIIPMMFSTPESLLASCILRGNFAEAHQVVLMFNLKSSPIAGELMFVERYQEVIQELARVEHKIENQNSDGGNNTIRRTGSGRSTLQAIGSAAAAGMVFYSISDVTEKLLSPSEDPIPTLQEDFWINATPMETTTPLREVLEDLSPPAMAAFDLACCQCQLWKTCKQLLETAERRLSSSLESRGRRLDQVVLNPDGMRGFPFVLQQISKILSYPLMQTGLAKSETLEERGGGAPRSSISELLQMCWPSLTEDCVASHTSLSQQLEQALQSLREALALPESKSTPLSCLVEQAAQKAPEAEAHPVHIQSQLLQKTLGRQTPAGHRQTDYVGAFFSYCSSLAAVLLRSLSSDPDHVEVRVGNPFVLLQQSSSQLVSHLLLERQVPPDRLAALLAQEHLNLSVPQVIVSCCCEPLTLCLSRQSQQASSLLTHLGMLAREHASHLLDGLPLSTLGSPRPSENPSAERKSHSSPKDSLPAFTASALAFLKSRSKILAMVACLRTSRGTKVSKPGLSWKELRGRREAPLTAEKVAQECEHLLEQFPVFEAALLANWEPLQQASEPKQSLAASLCGQANLSTVLLGLHSSLALDILTEAFEGALVARDWPRALQLIDVYGQDLDDLSIVQDSVLTCAAVCDKEGWQYLFPVKDASLRSQLALRFVDKWPLESCLEILAYCVSDMAVQEELKSELQRKLMELRVYQKILGLQDPPVWCDWQTLRSCCAEDPSAVMDMMLDSQEYELCEEWGRLYPIPREHLVSLHHKHLLHLLERSEHDKALQLLQRIPDPTMCLEVTERSLDQHPSLATSHFLANYLTSHFYGELTTDRHREIQALYMGSKVLLTLPEQHRASYARLSSSPLLMLEQLLMNMKVDWATTAVQTLHQLLAGQDIGFTLDEVDSLLSRYAGKALDLPYPLREKRSDSMIHLQEPVHQASDSETLSRSSSAEFSAAAAPGSALVRSPSPKERAFPQTQPPVEFVPPETPPARDQWVPDETESVCMVCCREHFTMFNRRHHCRRCGRLVCGSCSTKKMVVEGFRENPTRVCDQCYSYYNKDTPEESPCQSEVPDSAKNESPPYSAVVRVPKATEVEWILSLSEEENELVRSEFYYEQAPSASLCIAILNLHRDSIACGHQLIEHCCRLSRGLTNPEVDAGLLIDIMKQLLFSAKMMFVKAGQSQDLALCDSYISKVDVLHLLVAAAYRHVPSLDQILQPAAVTRLRNQLLEAEYYQLGVEVSTKTGLDSTGAWHAWGMACLKAGNLTVAREKFTRCLKPPLDLNQLSHGSRLVQDVVEYLESTVRPLVSLQDDDYFATLRELEATLRTQSLLLEAIPEGKIMNNTYYQECLFYLHNYSTNLAIISFYMRHNCLREALLHLLNKESPPEVFIEGIFQPSYKSGKLHTLENLLESIDPTLESWGAHLIAACQHLQKNSYYHILYELQQFMKDQVRAAMTCIRFFSHKAKSYTELGEKLSWLLKAKDHLKIYLQETSRSSGRKKATFFRKKMTAADVSRHMNTLQLQMEVTRFLHRCESAGTSQVTTLPLPTLFGNNHMKMEVACKVMLGGKNVEDGFGIAFRVLQDFQLDAAATYCRAARQLVEREKYGEIRQLLKCVSESGMAAKSDGDTILLNCLEAFKRIPPQELEGLIQAIHSDDNKVRAYLTCCKLRSAYLIAVKQEHSQAAALVQQVQQAAKSSGDSVVQDICAQWLLTSHSRGAHGSGSRK</sequence>
<proteinExistence type="evidence at protein level"/>
<feature type="chain" id="PRO_0000314613" description="Zinc finger FYVE domain-containing protein 26">
    <location>
        <begin position="1"/>
        <end position="2529"/>
    </location>
</feature>
<feature type="zinc finger region" description="FYVE-type" evidence="5">
    <location>
        <begin position="1802"/>
        <end position="1862"/>
    </location>
</feature>
<feature type="region of interest" description="Disordered" evidence="6">
    <location>
        <begin position="584"/>
        <end position="650"/>
    </location>
</feature>
<feature type="region of interest" description="Disordered" evidence="6">
    <location>
        <begin position="689"/>
        <end position="709"/>
    </location>
</feature>
<feature type="region of interest" description="Disordered" evidence="6">
    <location>
        <begin position="733"/>
        <end position="810"/>
    </location>
</feature>
<feature type="region of interest" description="Disordered" evidence="6">
    <location>
        <begin position="1258"/>
        <end position="1286"/>
    </location>
</feature>
<feature type="region of interest" description="Disordered" evidence="6">
    <location>
        <begin position="1762"/>
        <end position="1799"/>
    </location>
</feature>
<feature type="region of interest" description="Disordered" evidence="6">
    <location>
        <begin position="1865"/>
        <end position="1884"/>
    </location>
</feature>
<feature type="coiled-coil region" evidence="4">
    <location>
        <begin position="859"/>
        <end position="884"/>
    </location>
</feature>
<feature type="coiled-coil region" evidence="4">
    <location>
        <begin position="1488"/>
        <end position="1515"/>
    </location>
</feature>
<feature type="compositionally biased region" description="Basic and acidic residues" evidence="6">
    <location>
        <begin position="689"/>
        <end position="701"/>
    </location>
</feature>
<feature type="compositionally biased region" description="Basic residues" evidence="6">
    <location>
        <begin position="755"/>
        <end position="765"/>
    </location>
</feature>
<feature type="compositionally biased region" description="Low complexity" evidence="6">
    <location>
        <begin position="778"/>
        <end position="796"/>
    </location>
</feature>
<feature type="compositionally biased region" description="Polar residues" evidence="6">
    <location>
        <begin position="797"/>
        <end position="810"/>
    </location>
</feature>
<feature type="compositionally biased region" description="Polar residues" evidence="6">
    <location>
        <begin position="1263"/>
        <end position="1273"/>
    </location>
</feature>
<feature type="compositionally biased region" description="Basic and acidic residues" evidence="6">
    <location>
        <begin position="1274"/>
        <end position="1283"/>
    </location>
</feature>
<feature type="binding site" evidence="5">
    <location>
        <position position="1808"/>
    </location>
    <ligand>
        <name>Zn(2+)</name>
        <dbReference type="ChEBI" id="CHEBI:29105"/>
        <label>1</label>
    </ligand>
</feature>
<feature type="binding site" evidence="5">
    <location>
        <position position="1811"/>
    </location>
    <ligand>
        <name>Zn(2+)</name>
        <dbReference type="ChEBI" id="CHEBI:29105"/>
        <label>1</label>
    </ligand>
</feature>
<feature type="binding site" evidence="5">
    <location>
        <position position="1825"/>
    </location>
    <ligand>
        <name>Zn(2+)</name>
        <dbReference type="ChEBI" id="CHEBI:29105"/>
        <label>2</label>
    </ligand>
</feature>
<feature type="binding site" evidence="5">
    <location>
        <position position="1828"/>
    </location>
    <ligand>
        <name>Zn(2+)</name>
        <dbReference type="ChEBI" id="CHEBI:29105"/>
        <label>2</label>
    </ligand>
</feature>
<feature type="binding site" evidence="5">
    <location>
        <position position="1833"/>
    </location>
    <ligand>
        <name>Zn(2+)</name>
        <dbReference type="ChEBI" id="CHEBI:29105"/>
        <label>1</label>
    </ligand>
</feature>
<feature type="binding site" evidence="5">
    <location>
        <position position="1836"/>
    </location>
    <ligand>
        <name>Zn(2+)</name>
        <dbReference type="ChEBI" id="CHEBI:29105"/>
        <label>1</label>
    </ligand>
</feature>
<feature type="binding site" evidence="5">
    <location>
        <position position="1854"/>
    </location>
    <ligand>
        <name>Zn(2+)</name>
        <dbReference type="ChEBI" id="CHEBI:29105"/>
        <label>2</label>
    </ligand>
</feature>
<feature type="binding site" evidence="5">
    <location>
        <position position="1857"/>
    </location>
    <ligand>
        <name>Zn(2+)</name>
        <dbReference type="ChEBI" id="CHEBI:29105"/>
        <label>2</label>
    </ligand>
</feature>
<feature type="modified residue" description="Phosphoserine" evidence="2">
    <location>
        <position position="605"/>
    </location>
</feature>
<feature type="modified residue" description="Phosphoserine" evidence="3">
    <location>
        <position position="609"/>
    </location>
</feature>
<feature type="modified residue" description="Phosphoserine" evidence="3">
    <location>
        <position position="791"/>
    </location>
</feature>
<feature type="modified residue" description="Phosphoserine" evidence="9">
    <location>
        <position position="1732"/>
    </location>
</feature>
<feature type="modified residue" description="Phosphoserine" evidence="3">
    <location>
        <position position="1754"/>
    </location>
</feature>
<feature type="modified residue" description="Phosphoserine" evidence="9">
    <location>
        <position position="1770"/>
    </location>
</feature>
<feature type="modified residue" description="Phosphoserine" evidence="9">
    <location>
        <position position="1772"/>
    </location>
</feature>
<feature type="splice variant" id="VSP_030342" description="In isoform 3." evidence="7">
    <location>
        <begin position="1"/>
        <end position="1714"/>
    </location>
</feature>
<feature type="splice variant" id="VSP_030343" description="In isoform 2." evidence="7">
    <location>
        <begin position="1201"/>
        <end position="2529"/>
    </location>
</feature>
<feature type="splice variant" id="VSP_030344" description="In isoform 3." evidence="7">
    <original>AGKALDLPYPLREKRS</original>
    <variation>MLVVEQCFVSSLSLSA</variation>
    <location>
        <begin position="1715"/>
        <end position="1730"/>
    </location>
</feature>
<feature type="splice variant" id="VSP_030345" description="In isoform 3." evidence="7">
    <original>MLG</original>
    <variation>RRL</variation>
    <location>
        <begin position="2368"/>
        <end position="2370"/>
    </location>
</feature>
<feature type="splice variant" id="VSP_030346" description="In isoform 3." evidence="7">
    <location>
        <begin position="2371"/>
        <end position="2529"/>
    </location>
</feature>
<feature type="sequence conflict" description="In Ref. 1; BAE21117." evidence="8" ref="1">
    <original>M</original>
    <variation>V</variation>
    <location>
        <position position="495"/>
    </location>
</feature>
<feature type="sequence conflict" description="In Ref. 3; AAI41360." evidence="8" ref="3">
    <original>Q</original>
    <variation>H</variation>
    <location>
        <position position="1180"/>
    </location>
</feature>
<feature type="sequence conflict" description="In Ref. 3; AAH06654." evidence="8" ref="3">
    <original>A</original>
    <variation>V</variation>
    <location>
        <position position="2489"/>
    </location>
</feature>
<feature type="sequence conflict" description="In Ref. 3; AAH06654." evidence="8" ref="3">
    <original>S</original>
    <variation>C</variation>
    <location>
        <position position="2525"/>
    </location>
</feature>
<evidence type="ECO:0000250" key="1"/>
<evidence type="ECO:0000250" key="2">
    <source>
        <dbReference type="UniProtKB" id="D4A8G9"/>
    </source>
</evidence>
<evidence type="ECO:0000250" key="3">
    <source>
        <dbReference type="UniProtKB" id="Q68DK2"/>
    </source>
</evidence>
<evidence type="ECO:0000255" key="4"/>
<evidence type="ECO:0000255" key="5">
    <source>
        <dbReference type="PROSITE-ProRule" id="PRU00091"/>
    </source>
</evidence>
<evidence type="ECO:0000256" key="6">
    <source>
        <dbReference type="SAM" id="MobiDB-lite"/>
    </source>
</evidence>
<evidence type="ECO:0000303" key="7">
    <source>
    </source>
</evidence>
<evidence type="ECO:0000305" key="8"/>
<evidence type="ECO:0007744" key="9">
    <source>
    </source>
</evidence>